<feature type="chain" id="PRO_0000077684" description="Mu-like prophage FluMu G protein 2">
    <location>
        <begin position="1"/>
        <end position="138"/>
    </location>
</feature>
<organism>
    <name type="scientific">Haemophilus influenzae (strain ATCC 51907 / DSM 11121 / KW20 / Rd)</name>
    <dbReference type="NCBI Taxonomy" id="71421"/>
    <lineage>
        <taxon>Bacteria</taxon>
        <taxon>Pseudomonadati</taxon>
        <taxon>Pseudomonadota</taxon>
        <taxon>Gammaproteobacteria</taxon>
        <taxon>Pasteurellales</taxon>
        <taxon>Pasteurellaceae</taxon>
        <taxon>Haemophilus</taxon>
    </lineage>
</organism>
<dbReference type="EMBL" id="L42023">
    <property type="protein sequence ID" value="AAC23215.1"/>
    <property type="molecule type" value="Genomic_DNA"/>
</dbReference>
<dbReference type="PIR" id="B64130">
    <property type="entry name" value="B64130"/>
</dbReference>
<dbReference type="RefSeq" id="NP_439715.1">
    <property type="nucleotide sequence ID" value="NC_000907.1"/>
</dbReference>
<dbReference type="STRING" id="71421.HI_1568"/>
<dbReference type="EnsemblBacteria" id="AAC23215">
    <property type="protein sequence ID" value="AAC23215"/>
    <property type="gene ID" value="HI_1568"/>
</dbReference>
<dbReference type="KEGG" id="hin:HI_1568"/>
<dbReference type="PATRIC" id="fig|71421.8.peg.1639"/>
<dbReference type="eggNOG" id="COG5005">
    <property type="taxonomic scope" value="Bacteria"/>
</dbReference>
<dbReference type="HOGENOM" id="CLU_117141_0_1_6"/>
<dbReference type="OrthoDB" id="2081253at2"/>
<dbReference type="PhylomeDB" id="P45255"/>
<dbReference type="BioCyc" id="HINF71421:G1GJ1-1585-MONOMER"/>
<dbReference type="Proteomes" id="UP000000579">
    <property type="component" value="Chromosome"/>
</dbReference>
<dbReference type="InterPro" id="IPR006522">
    <property type="entry name" value="Phage_virion_morphogenesis"/>
</dbReference>
<dbReference type="NCBIfam" id="TIGR01635">
    <property type="entry name" value="tail_comp_S"/>
    <property type="match status" value="1"/>
</dbReference>
<dbReference type="Pfam" id="PF05069">
    <property type="entry name" value="Phage_tail_S"/>
    <property type="match status" value="1"/>
</dbReference>
<accession>P45255</accession>
<gene>
    <name type="ordered locus">HI_1568</name>
</gene>
<reference key="1">
    <citation type="journal article" date="1995" name="Science">
        <title>Whole-genome random sequencing and assembly of Haemophilus influenzae Rd.</title>
        <authorList>
            <person name="Fleischmann R.D."/>
            <person name="Adams M.D."/>
            <person name="White O."/>
            <person name="Clayton R.A."/>
            <person name="Kirkness E.F."/>
            <person name="Kerlavage A.R."/>
            <person name="Bult C.J."/>
            <person name="Tomb J.-F."/>
            <person name="Dougherty B.A."/>
            <person name="Merrick J.M."/>
            <person name="McKenney K."/>
            <person name="Sutton G.G."/>
            <person name="FitzHugh W."/>
            <person name="Fields C.A."/>
            <person name="Gocayne J.D."/>
            <person name="Scott J.D."/>
            <person name="Shirley R."/>
            <person name="Liu L.-I."/>
            <person name="Glodek A."/>
            <person name="Kelley J.M."/>
            <person name="Weidman J.F."/>
            <person name="Phillips C.A."/>
            <person name="Spriggs T."/>
            <person name="Hedblom E."/>
            <person name="Cotton M.D."/>
            <person name="Utterback T.R."/>
            <person name="Hanna M.C."/>
            <person name="Nguyen D.T."/>
            <person name="Saudek D.M."/>
            <person name="Brandon R.C."/>
            <person name="Fine L.D."/>
            <person name="Fritchman J.L."/>
            <person name="Fuhrmann J.L."/>
            <person name="Geoghagen N.S.M."/>
            <person name="Gnehm C.L."/>
            <person name="McDonald L.A."/>
            <person name="Small K.V."/>
            <person name="Fraser C.M."/>
            <person name="Smith H.O."/>
            <person name="Venter J.C."/>
        </authorList>
    </citation>
    <scope>NUCLEOTIDE SEQUENCE [LARGE SCALE GENOMIC DNA]</scope>
    <source>
        <strain>ATCC 51907 / DSM 11121 / KW20 / Rd</strain>
    </source>
</reference>
<sequence length="138" mass="15204">MIEIEINNAQEITSALERLAQATAHRAPLMRSIAGTMESAVAQNFEVGGRPAWKKLKIRQGTPLVDTENLMASITSEYNNNEAIVGTNEPYAAIHQFGGKAGRGRKVAIPARPFLILTPQDEADILEDIQDYFQLLIK</sequence>
<comment type="similarity">
    <text evidence="1">To phage Mu protein G.</text>
</comment>
<proteinExistence type="predicted"/>
<keyword id="KW-1185">Reference proteome</keyword>
<protein>
    <recommendedName>
        <fullName>Mu-like prophage FluMu G protein 2</fullName>
    </recommendedName>
</protein>
<evidence type="ECO:0000305" key="1"/>
<name>VPG2_HAEIN</name>